<gene>
    <name evidence="4" type="primary">vte5</name>
    <name evidence="6" type="ordered locus">slr1652</name>
</gene>
<organism>
    <name type="scientific">Synechocystis sp. (strain ATCC 27184 / PCC 6803 / Kazusa)</name>
    <dbReference type="NCBI Taxonomy" id="1111708"/>
    <lineage>
        <taxon>Bacteria</taxon>
        <taxon>Bacillati</taxon>
        <taxon>Cyanobacteriota</taxon>
        <taxon>Cyanophyceae</taxon>
        <taxon>Synechococcales</taxon>
        <taxon>Merismopediaceae</taxon>
        <taxon>Synechocystis</taxon>
    </lineage>
</organism>
<keyword id="KW-1003">Cell membrane</keyword>
<keyword id="KW-0418">Kinase</keyword>
<keyword id="KW-0472">Membrane</keyword>
<keyword id="KW-0547">Nucleotide-binding</keyword>
<keyword id="KW-1185">Reference proteome</keyword>
<keyword id="KW-0808">Transferase</keyword>
<keyword id="KW-0812">Transmembrane</keyword>
<keyword id="KW-1133">Transmembrane helix</keyword>
<feature type="chain" id="PRO_0000432651" description="Phytol kinase">
    <location>
        <begin position="1"/>
        <end position="233"/>
    </location>
</feature>
<feature type="transmembrane region" description="Helical" evidence="1">
    <location>
        <begin position="9"/>
        <end position="29"/>
    </location>
</feature>
<feature type="transmembrane region" description="Helical" evidence="1">
    <location>
        <begin position="56"/>
        <end position="76"/>
    </location>
</feature>
<feature type="transmembrane region" description="Helical" evidence="1">
    <location>
        <begin position="96"/>
        <end position="118"/>
    </location>
</feature>
<feature type="transmembrane region" description="Helical" evidence="1">
    <location>
        <begin position="122"/>
        <end position="144"/>
    </location>
</feature>
<feature type="transmembrane region" description="Helical" evidence="1">
    <location>
        <begin position="172"/>
        <end position="192"/>
    </location>
</feature>
<feature type="transmembrane region" description="Helical" evidence="1">
    <location>
        <begin position="213"/>
        <end position="233"/>
    </location>
</feature>
<dbReference type="EC" id="2.7.1.182" evidence="2"/>
<dbReference type="EMBL" id="BA000022">
    <property type="protein sequence ID" value="BAA18769.1"/>
    <property type="molecule type" value="Genomic_DNA"/>
</dbReference>
<dbReference type="PIR" id="S76857">
    <property type="entry name" value="S76857"/>
</dbReference>
<dbReference type="IntAct" id="P74653">
    <property type="interactions" value="1"/>
</dbReference>
<dbReference type="STRING" id="1148.gene:10500541"/>
<dbReference type="SwissLipids" id="SLP:000001497"/>
<dbReference type="PaxDb" id="1148-1653859"/>
<dbReference type="EnsemblBacteria" id="BAA18769">
    <property type="protein sequence ID" value="BAA18769"/>
    <property type="gene ID" value="BAA18769"/>
</dbReference>
<dbReference type="KEGG" id="syn:slr1652"/>
<dbReference type="eggNOG" id="COG0170">
    <property type="taxonomic scope" value="Bacteria"/>
</dbReference>
<dbReference type="InParanoid" id="P74653"/>
<dbReference type="PhylomeDB" id="P74653"/>
<dbReference type="BRENDA" id="2.7.1.182">
    <property type="organism ID" value="382"/>
</dbReference>
<dbReference type="UniPathway" id="UPA00160"/>
<dbReference type="Proteomes" id="UP000001425">
    <property type="component" value="Chromosome"/>
</dbReference>
<dbReference type="GO" id="GO:0005886">
    <property type="term" value="C:plasma membrane"/>
    <property type="evidence" value="ECO:0007669"/>
    <property type="project" value="UniProtKB-SubCell"/>
</dbReference>
<dbReference type="GO" id="GO:0004143">
    <property type="term" value="F:ATP-dependent diacylglycerol kinase activity"/>
    <property type="evidence" value="ECO:0007669"/>
    <property type="project" value="InterPro"/>
</dbReference>
<dbReference type="GO" id="GO:0000166">
    <property type="term" value="F:nucleotide binding"/>
    <property type="evidence" value="ECO:0007669"/>
    <property type="project" value="UniProtKB-KW"/>
</dbReference>
<dbReference type="GO" id="GO:0010276">
    <property type="term" value="F:phytol kinase activity"/>
    <property type="evidence" value="ECO:0000314"/>
    <property type="project" value="UniProtKB"/>
</dbReference>
<dbReference type="GO" id="GO:0033306">
    <property type="term" value="P:phytol metabolic process"/>
    <property type="evidence" value="ECO:0000314"/>
    <property type="project" value="UniProtKB"/>
</dbReference>
<dbReference type="GO" id="GO:0010189">
    <property type="term" value="P:vitamin E biosynthetic process"/>
    <property type="evidence" value="ECO:0000315"/>
    <property type="project" value="UniProtKB"/>
</dbReference>
<dbReference type="InterPro" id="IPR037997">
    <property type="entry name" value="Dgk1-like"/>
</dbReference>
<dbReference type="PANTHER" id="PTHR31303">
    <property type="entry name" value="CTP-DEPENDENT DIACYLGLYCEROL KINASE 1"/>
    <property type="match status" value="1"/>
</dbReference>
<dbReference type="PANTHER" id="PTHR31303:SF1">
    <property type="entry name" value="CTP-DEPENDENT DIACYLGLYCEROL KINASE 1"/>
    <property type="match status" value="1"/>
</dbReference>
<comment type="function">
    <text evidence="2 3">Catalyzes the CTP-dependent phosphorylation of phytol to phytylmonophosphate (PMP). Can also use UTP as an alternative phosphate donor, but not ATP or GTP. Is involved in tocopherol biosynthesis, via the utilization of phytol generated by chlorophyll degradation (PubMed:16361393). Also plays a significant but not critical role in the recycling of phytol for the biosynthesis of new chlorophyll molecules (PubMed:17499209).</text>
</comment>
<comment type="catalytic activity">
    <reaction evidence="2">
        <text>phytol + CTP = phytyl phosphate + CDP + H(+)</text>
        <dbReference type="Rhea" id="RHEA:38055"/>
        <dbReference type="ChEBI" id="CHEBI:15378"/>
        <dbReference type="ChEBI" id="CHEBI:17327"/>
        <dbReference type="ChEBI" id="CHEBI:37563"/>
        <dbReference type="ChEBI" id="CHEBI:58069"/>
        <dbReference type="ChEBI" id="CHEBI:75483"/>
        <dbReference type="EC" id="2.7.1.182"/>
    </reaction>
</comment>
<comment type="pathway">
    <text evidence="2">Cofactor biosynthesis; tocopherol biosynthesis.</text>
</comment>
<comment type="subcellular location">
    <subcellularLocation>
        <location evidence="1">Cell membrane</location>
        <topology evidence="1">Multi-pass membrane protein</topology>
    </subcellularLocation>
</comment>
<comment type="disruption phenotype">
    <text evidence="2 3">Cells lacking this gene show a reduction in tocopherol levels by 50% or more, and an accumulation of free phytol (PubMed:16361393). When measuring the kinetics of chlorophyll labeling after adding 13C, the mutant cells show a similar rate of chlorophyll synthesis and degradation as the wild type, but show a reduced rate of accumulation of chlorophyll containing labeled porphyrin/unlabeled phytyl (13Por12Phy) (PubMed:17499209).</text>
</comment>
<comment type="similarity">
    <text evidence="5">Belongs to the polyprenol kinase family.</text>
</comment>
<evidence type="ECO:0000255" key="1"/>
<evidence type="ECO:0000269" key="2">
    <source>
    </source>
</evidence>
<evidence type="ECO:0000269" key="3">
    <source>
    </source>
</evidence>
<evidence type="ECO:0000303" key="4">
    <source>
    </source>
</evidence>
<evidence type="ECO:0000305" key="5"/>
<evidence type="ECO:0000312" key="6">
    <source>
        <dbReference type="EMBL" id="BAA18769.1"/>
    </source>
</evidence>
<sequence>MGIEQNNPMALPLWIAVGLAATYLGAVVLTAELLNRLSLSPAEVTRKIVHIGAGQVVLIAWWLSIPGWVGAIAGVFAAGIAVLSYRLPILPSLESVGRHSYGTLFYALSIGLLVGGFFSLGLPIFAAIGILVMAWGDGLAALVGQRWGRHRYQVFGFRKSWEGTLTMVLASFLVTVVFLSYTFGFTVIVLVVAGTVAIASAGLESFSRWGIDNLTVPLGSALIAWAGSYLWLG</sequence>
<protein>
    <recommendedName>
        <fullName evidence="4">Phytol kinase</fullName>
        <ecNumber evidence="2">2.7.1.182</ecNumber>
    </recommendedName>
</protein>
<proteinExistence type="evidence at protein level"/>
<accession>P74653</accession>
<reference key="1">
    <citation type="journal article" date="1996" name="DNA Res.">
        <title>Sequence analysis of the genome of the unicellular cyanobacterium Synechocystis sp. strain PCC6803. II. Sequence determination of the entire genome and assignment of potential protein-coding regions.</title>
        <authorList>
            <person name="Kaneko T."/>
            <person name="Sato S."/>
            <person name="Kotani H."/>
            <person name="Tanaka A."/>
            <person name="Asamizu E."/>
            <person name="Nakamura Y."/>
            <person name="Miyajima N."/>
            <person name="Hirosawa M."/>
            <person name="Sugiura M."/>
            <person name="Sasamoto S."/>
            <person name="Kimura T."/>
            <person name="Hosouchi T."/>
            <person name="Matsuno A."/>
            <person name="Muraki A."/>
            <person name="Nakazaki N."/>
            <person name="Naruo K."/>
            <person name="Okumura S."/>
            <person name="Shimpo S."/>
            <person name="Takeuchi C."/>
            <person name="Wada T."/>
            <person name="Watanabe A."/>
            <person name="Yamada M."/>
            <person name="Yasuda M."/>
            <person name="Tabata S."/>
        </authorList>
    </citation>
    <scope>NUCLEOTIDE SEQUENCE [LARGE SCALE GENOMIC DNA]</scope>
    <source>
        <strain>ATCC 27184 / PCC 6803 / Kazusa</strain>
    </source>
</reference>
<reference key="2">
    <citation type="journal article" date="2006" name="Plant Cell">
        <title>The Arabidopsis vitamin E pathway gene5-1 mutant reveals a critical role for phytol kinase in seed tocopherol biosynthesis.</title>
        <authorList>
            <person name="Valentin H.E."/>
            <person name="Lincoln K."/>
            <person name="Moshiri F."/>
            <person name="Jensen P.K."/>
            <person name="Qi Q."/>
            <person name="Venkatesh T.V."/>
            <person name="Karunanandaa B."/>
            <person name="Baszis S.R."/>
            <person name="Norris S.R."/>
            <person name="Savidge B."/>
            <person name="Gruys K.J."/>
            <person name="Last R.L."/>
        </authorList>
    </citation>
    <scope>FUNCTION</scope>
    <scope>CATALYTIC ACTIVITY</scope>
    <scope>SUBSTRATE SPECIFICITY</scope>
    <scope>DISRUPTION PHENOTYPE</scope>
    <scope>PATHWAY</scope>
    <source>
        <strain>ATCC 27184 / PCC 6803 / N-1</strain>
    </source>
</reference>
<reference key="3">
    <citation type="journal article" date="2007" name="Biochim. Biophys. Acta">
        <title>Continuous chlorophyll degradation accompanied by chlorophyllide and phytol reutilization for chlorophyll synthesis in Synechocystis sp. PCC 6803.</title>
        <authorList>
            <person name="Vavilin D."/>
            <person name="Vermaas W."/>
        </authorList>
    </citation>
    <scope>FUNCTION</scope>
    <scope>DISRUPTION PHENOTYPE</scope>
    <source>
        <strain>ATCC 27184 / PCC 6803 / N-1</strain>
    </source>
</reference>
<name>PHYK_SYNY3</name>